<organism>
    <name type="scientific">Burkholderia mallei (strain SAVP1)</name>
    <dbReference type="NCBI Taxonomy" id="320388"/>
    <lineage>
        <taxon>Bacteria</taxon>
        <taxon>Pseudomonadati</taxon>
        <taxon>Pseudomonadota</taxon>
        <taxon>Betaproteobacteria</taxon>
        <taxon>Burkholderiales</taxon>
        <taxon>Burkholderiaceae</taxon>
        <taxon>Burkholderia</taxon>
        <taxon>pseudomallei group</taxon>
    </lineage>
</organism>
<protein>
    <recommendedName>
        <fullName evidence="1">RNA pyrophosphohydrolase</fullName>
        <ecNumber evidence="1">3.6.1.-</ecNumber>
    </recommendedName>
    <alternativeName>
        <fullName evidence="1">(Di)nucleoside polyphosphate hydrolase</fullName>
    </alternativeName>
</protein>
<reference key="1">
    <citation type="journal article" date="2010" name="Genome Biol. Evol.">
        <title>Continuing evolution of Burkholderia mallei through genome reduction and large-scale rearrangements.</title>
        <authorList>
            <person name="Losada L."/>
            <person name="Ronning C.M."/>
            <person name="DeShazer D."/>
            <person name="Woods D."/>
            <person name="Fedorova N."/>
            <person name="Kim H.S."/>
            <person name="Shabalina S.A."/>
            <person name="Pearson T.R."/>
            <person name="Brinkac L."/>
            <person name="Tan P."/>
            <person name="Nandi T."/>
            <person name="Crabtree J."/>
            <person name="Badger J."/>
            <person name="Beckstrom-Sternberg S."/>
            <person name="Saqib M."/>
            <person name="Schutzer S.E."/>
            <person name="Keim P."/>
            <person name="Nierman W.C."/>
        </authorList>
    </citation>
    <scope>NUCLEOTIDE SEQUENCE [LARGE SCALE GENOMIC DNA]</scope>
    <source>
        <strain>SAVP1</strain>
    </source>
</reference>
<sequence>MLDREGFRPNVGIILLNAHNEVFWGKRLREHSWQFPQGGIKYGETPMQAMYRELHEETGLLPEHVKIIGRTRDWLRYEVPDKFIKREVRGHYRGQKQIWFLLRMVGRDCDICLRATDHPEFDAWRWNEYWVPLDAVIEFKRDVYQLALTELSRFLRRPAQRTDKSRGPRAPRYPRVANGHAASEAPAAIDTSAVCSEVEPGANALDETPPRVSLRD</sequence>
<accession>A1V0N7</accession>
<dbReference type="EC" id="3.6.1.-" evidence="1"/>
<dbReference type="EMBL" id="CP000526">
    <property type="protein sequence ID" value="ABM51773.1"/>
    <property type="molecule type" value="Genomic_DNA"/>
</dbReference>
<dbReference type="RefSeq" id="WP_004194263.1">
    <property type="nucleotide sequence ID" value="NC_008785.1"/>
</dbReference>
<dbReference type="SMR" id="A1V0N7"/>
<dbReference type="KEGG" id="bmv:BMASAVP1_A0440"/>
<dbReference type="HOGENOM" id="CLU_087195_0_1_4"/>
<dbReference type="GO" id="GO:0016462">
    <property type="term" value="F:pyrophosphatase activity"/>
    <property type="evidence" value="ECO:0007669"/>
    <property type="project" value="UniProtKB-ARBA"/>
</dbReference>
<dbReference type="CDD" id="cd03671">
    <property type="entry name" value="NUDIX_Ap4A_hydrolase_plant_like"/>
    <property type="match status" value="1"/>
</dbReference>
<dbReference type="Gene3D" id="3.90.79.10">
    <property type="entry name" value="Nucleoside Triphosphate Pyrophosphohydrolase"/>
    <property type="match status" value="1"/>
</dbReference>
<dbReference type="HAMAP" id="MF_00298">
    <property type="entry name" value="Nudix_RppH"/>
    <property type="match status" value="1"/>
</dbReference>
<dbReference type="InterPro" id="IPR020476">
    <property type="entry name" value="Nudix_hydrolase"/>
</dbReference>
<dbReference type="InterPro" id="IPR015797">
    <property type="entry name" value="NUDIX_hydrolase-like_dom_sf"/>
</dbReference>
<dbReference type="InterPro" id="IPR020084">
    <property type="entry name" value="NUDIX_hydrolase_CS"/>
</dbReference>
<dbReference type="InterPro" id="IPR000086">
    <property type="entry name" value="NUDIX_hydrolase_dom"/>
</dbReference>
<dbReference type="InterPro" id="IPR022927">
    <property type="entry name" value="RppH"/>
</dbReference>
<dbReference type="NCBIfam" id="NF001935">
    <property type="entry name" value="PRK00714.1-2"/>
    <property type="match status" value="1"/>
</dbReference>
<dbReference type="NCBIfam" id="NF001937">
    <property type="entry name" value="PRK00714.1-4"/>
    <property type="match status" value="1"/>
</dbReference>
<dbReference type="NCBIfam" id="NF001938">
    <property type="entry name" value="PRK00714.1-5"/>
    <property type="match status" value="1"/>
</dbReference>
<dbReference type="PANTHER" id="PTHR43736">
    <property type="entry name" value="ADP-RIBOSE PYROPHOSPHATASE"/>
    <property type="match status" value="1"/>
</dbReference>
<dbReference type="PANTHER" id="PTHR43736:SF1">
    <property type="entry name" value="DIHYDRONEOPTERIN TRIPHOSPHATE DIPHOSPHATASE"/>
    <property type="match status" value="1"/>
</dbReference>
<dbReference type="Pfam" id="PF00293">
    <property type="entry name" value="NUDIX"/>
    <property type="match status" value="1"/>
</dbReference>
<dbReference type="PRINTS" id="PR00502">
    <property type="entry name" value="NUDIXFAMILY"/>
</dbReference>
<dbReference type="SUPFAM" id="SSF55811">
    <property type="entry name" value="Nudix"/>
    <property type="match status" value="1"/>
</dbReference>
<dbReference type="PROSITE" id="PS51462">
    <property type="entry name" value="NUDIX"/>
    <property type="match status" value="1"/>
</dbReference>
<dbReference type="PROSITE" id="PS00893">
    <property type="entry name" value="NUDIX_BOX"/>
    <property type="match status" value="1"/>
</dbReference>
<keyword id="KW-0378">Hydrolase</keyword>
<evidence type="ECO:0000255" key="1">
    <source>
        <dbReference type="HAMAP-Rule" id="MF_00298"/>
    </source>
</evidence>
<evidence type="ECO:0000256" key="2">
    <source>
        <dbReference type="SAM" id="MobiDB-lite"/>
    </source>
</evidence>
<comment type="function">
    <text evidence="1">Accelerates the degradation of transcripts by removing pyrophosphate from the 5'-end of triphosphorylated RNA, leading to a more labile monophosphorylated state that can stimulate subsequent ribonuclease cleavage.</text>
</comment>
<comment type="cofactor">
    <cofactor evidence="1">
        <name>a divalent metal cation</name>
        <dbReference type="ChEBI" id="CHEBI:60240"/>
    </cofactor>
</comment>
<comment type="similarity">
    <text evidence="1">Belongs to the Nudix hydrolase family. RppH subfamily.</text>
</comment>
<feature type="chain" id="PRO_1000021936" description="RNA pyrophosphohydrolase">
    <location>
        <begin position="1"/>
        <end position="216"/>
    </location>
</feature>
<feature type="domain" description="Nudix hydrolase" evidence="1">
    <location>
        <begin position="6"/>
        <end position="149"/>
    </location>
</feature>
<feature type="region of interest" description="Disordered" evidence="2">
    <location>
        <begin position="159"/>
        <end position="188"/>
    </location>
</feature>
<feature type="short sequence motif" description="Nudix box">
    <location>
        <begin position="38"/>
        <end position="59"/>
    </location>
</feature>
<name>RPPH_BURMS</name>
<proteinExistence type="inferred from homology"/>
<gene>
    <name evidence="1" type="primary">rppH</name>
    <name evidence="1" type="synonym">nudH</name>
    <name type="ordered locus">BMASAVP1_A0440</name>
</gene>